<evidence type="ECO:0000255" key="1">
    <source>
        <dbReference type="HAMAP-Rule" id="MF_01006"/>
    </source>
</evidence>
<proteinExistence type="inferred from homology"/>
<reference key="1">
    <citation type="journal article" date="2003" name="Nat. Genet.">
        <title>Comparative analysis of the genome sequences of Bordetella pertussis, Bordetella parapertussis and Bordetella bronchiseptica.</title>
        <authorList>
            <person name="Parkhill J."/>
            <person name="Sebaihia M."/>
            <person name="Preston A."/>
            <person name="Murphy L.D."/>
            <person name="Thomson N.R."/>
            <person name="Harris D.E."/>
            <person name="Holden M.T.G."/>
            <person name="Churcher C.M."/>
            <person name="Bentley S.D."/>
            <person name="Mungall K.L."/>
            <person name="Cerdeno-Tarraga A.-M."/>
            <person name="Temple L."/>
            <person name="James K.D."/>
            <person name="Harris B."/>
            <person name="Quail M.A."/>
            <person name="Achtman M."/>
            <person name="Atkin R."/>
            <person name="Baker S."/>
            <person name="Basham D."/>
            <person name="Bason N."/>
            <person name="Cherevach I."/>
            <person name="Chillingworth T."/>
            <person name="Collins M."/>
            <person name="Cronin A."/>
            <person name="Davis P."/>
            <person name="Doggett J."/>
            <person name="Feltwell T."/>
            <person name="Goble A."/>
            <person name="Hamlin N."/>
            <person name="Hauser H."/>
            <person name="Holroyd S."/>
            <person name="Jagels K."/>
            <person name="Leather S."/>
            <person name="Moule S."/>
            <person name="Norberczak H."/>
            <person name="O'Neil S."/>
            <person name="Ormond D."/>
            <person name="Price C."/>
            <person name="Rabbinowitsch E."/>
            <person name="Rutter S."/>
            <person name="Sanders M."/>
            <person name="Saunders D."/>
            <person name="Seeger K."/>
            <person name="Sharp S."/>
            <person name="Simmonds M."/>
            <person name="Skelton J."/>
            <person name="Squares R."/>
            <person name="Squares S."/>
            <person name="Stevens K."/>
            <person name="Unwin L."/>
            <person name="Whitehead S."/>
            <person name="Barrell B.G."/>
            <person name="Maskell D.J."/>
        </authorList>
    </citation>
    <scope>NUCLEOTIDE SEQUENCE [LARGE SCALE GENOMIC DNA]</scope>
    <source>
        <strain>12822 / ATCC BAA-587 / NCTC 13253</strain>
    </source>
</reference>
<protein>
    <recommendedName>
        <fullName evidence="1">Undecaprenyl-diphosphatase</fullName>
        <ecNumber evidence="1">3.6.1.27</ecNumber>
    </recommendedName>
    <alternativeName>
        <fullName evidence="1">Bacitracin resistance protein</fullName>
    </alternativeName>
    <alternativeName>
        <fullName evidence="1">Undecaprenyl pyrophosphate phosphatase</fullName>
    </alternativeName>
</protein>
<name>UPPP_BORPA</name>
<dbReference type="EC" id="3.6.1.27" evidence="1"/>
<dbReference type="EMBL" id="BX640429">
    <property type="protein sequence ID" value="CAE37577.1"/>
    <property type="molecule type" value="Genomic_DNA"/>
</dbReference>
<dbReference type="RefSeq" id="WP_003809994.1">
    <property type="nucleotide sequence ID" value="NC_002928.3"/>
</dbReference>
<dbReference type="SMR" id="Q7W866"/>
<dbReference type="KEGG" id="bpa:BPP2279"/>
<dbReference type="HOGENOM" id="CLU_060296_2_0_4"/>
<dbReference type="Proteomes" id="UP000001421">
    <property type="component" value="Chromosome"/>
</dbReference>
<dbReference type="GO" id="GO:0005886">
    <property type="term" value="C:plasma membrane"/>
    <property type="evidence" value="ECO:0007669"/>
    <property type="project" value="UniProtKB-SubCell"/>
</dbReference>
<dbReference type="GO" id="GO:0050380">
    <property type="term" value="F:undecaprenyl-diphosphatase activity"/>
    <property type="evidence" value="ECO:0007669"/>
    <property type="project" value="UniProtKB-UniRule"/>
</dbReference>
<dbReference type="GO" id="GO:0071555">
    <property type="term" value="P:cell wall organization"/>
    <property type="evidence" value="ECO:0007669"/>
    <property type="project" value="UniProtKB-KW"/>
</dbReference>
<dbReference type="GO" id="GO:0009252">
    <property type="term" value="P:peptidoglycan biosynthetic process"/>
    <property type="evidence" value="ECO:0007669"/>
    <property type="project" value="UniProtKB-KW"/>
</dbReference>
<dbReference type="GO" id="GO:0008360">
    <property type="term" value="P:regulation of cell shape"/>
    <property type="evidence" value="ECO:0007669"/>
    <property type="project" value="UniProtKB-KW"/>
</dbReference>
<dbReference type="GO" id="GO:0046677">
    <property type="term" value="P:response to antibiotic"/>
    <property type="evidence" value="ECO:0007669"/>
    <property type="project" value="UniProtKB-UniRule"/>
</dbReference>
<dbReference type="HAMAP" id="MF_01006">
    <property type="entry name" value="Undec_diphosphatase"/>
    <property type="match status" value="1"/>
</dbReference>
<dbReference type="InterPro" id="IPR003824">
    <property type="entry name" value="UppP"/>
</dbReference>
<dbReference type="NCBIfam" id="NF001389">
    <property type="entry name" value="PRK00281.1-2"/>
    <property type="match status" value="1"/>
</dbReference>
<dbReference type="NCBIfam" id="NF001390">
    <property type="entry name" value="PRK00281.1-4"/>
    <property type="match status" value="1"/>
</dbReference>
<dbReference type="PANTHER" id="PTHR30622">
    <property type="entry name" value="UNDECAPRENYL-DIPHOSPHATASE"/>
    <property type="match status" value="1"/>
</dbReference>
<dbReference type="PANTHER" id="PTHR30622:SF3">
    <property type="entry name" value="UNDECAPRENYL-DIPHOSPHATASE"/>
    <property type="match status" value="1"/>
</dbReference>
<dbReference type="Pfam" id="PF02673">
    <property type="entry name" value="BacA"/>
    <property type="match status" value="1"/>
</dbReference>
<accession>Q7W866</accession>
<organism>
    <name type="scientific">Bordetella parapertussis (strain 12822 / ATCC BAA-587 / NCTC 13253)</name>
    <dbReference type="NCBI Taxonomy" id="257311"/>
    <lineage>
        <taxon>Bacteria</taxon>
        <taxon>Pseudomonadati</taxon>
        <taxon>Pseudomonadota</taxon>
        <taxon>Betaproteobacteria</taxon>
        <taxon>Burkholderiales</taxon>
        <taxon>Alcaligenaceae</taxon>
        <taxon>Bordetella</taxon>
    </lineage>
</organism>
<feature type="chain" id="PRO_0000151116" description="Undecaprenyl-diphosphatase">
    <location>
        <begin position="1"/>
        <end position="287"/>
    </location>
</feature>
<feature type="transmembrane region" description="Helical" evidence="1">
    <location>
        <begin position="6"/>
        <end position="26"/>
    </location>
</feature>
<feature type="transmembrane region" description="Helical" evidence="1">
    <location>
        <begin position="45"/>
        <end position="65"/>
    </location>
</feature>
<feature type="transmembrane region" description="Helical" evidence="1">
    <location>
        <begin position="89"/>
        <end position="109"/>
    </location>
</feature>
<feature type="transmembrane region" description="Helical" evidence="1">
    <location>
        <begin position="111"/>
        <end position="131"/>
    </location>
</feature>
<feature type="transmembrane region" description="Helical" evidence="1">
    <location>
        <begin position="204"/>
        <end position="224"/>
    </location>
</feature>
<feature type="transmembrane region" description="Helical" evidence="1">
    <location>
        <begin position="238"/>
        <end position="258"/>
    </location>
</feature>
<feature type="transmembrane region" description="Helical" evidence="1">
    <location>
        <begin position="266"/>
        <end position="286"/>
    </location>
</feature>
<keyword id="KW-0046">Antibiotic resistance</keyword>
<keyword id="KW-0997">Cell inner membrane</keyword>
<keyword id="KW-1003">Cell membrane</keyword>
<keyword id="KW-0133">Cell shape</keyword>
<keyword id="KW-0961">Cell wall biogenesis/degradation</keyword>
<keyword id="KW-0378">Hydrolase</keyword>
<keyword id="KW-0472">Membrane</keyword>
<keyword id="KW-0573">Peptidoglycan synthesis</keyword>
<keyword id="KW-0812">Transmembrane</keyword>
<keyword id="KW-1133">Transmembrane helix</keyword>
<sequence length="287" mass="31014">MTDSTLHLLKAFFLGIVEGLTEFIPVSSTGHLIVIGDWINFASSSGKVFEVVIQFGSILAVMWIFRARLWQLIRGTLTGVRQEVNFTRNLLLAFLPAAVIGAIFIKSIKQVFYHPGVVAVTLVVGGFIMLWVERRAPHTPGDAPGAADDTASDERATAHTLEQISAKQALGVGVAQCVAMIPGVSRSGATIIGGMIAGIQRKTATEFSFFLAMPTMLGAAVYDLYRNIGLLSQHDMSAIAVGFVAAFLSALVVVRAVLRFVANHTYRVFAWYRIALGLVVAAWIYAK</sequence>
<gene>
    <name evidence="1" type="primary">uppP</name>
    <name type="synonym">bacA</name>
    <name type="synonym">upk</name>
    <name type="ordered locus">BPP2279</name>
</gene>
<comment type="function">
    <text evidence="1">Catalyzes the dephosphorylation of undecaprenyl diphosphate (UPP). Confers resistance to bacitracin.</text>
</comment>
<comment type="catalytic activity">
    <reaction evidence="1">
        <text>di-trans,octa-cis-undecaprenyl diphosphate + H2O = di-trans,octa-cis-undecaprenyl phosphate + phosphate + H(+)</text>
        <dbReference type="Rhea" id="RHEA:28094"/>
        <dbReference type="ChEBI" id="CHEBI:15377"/>
        <dbReference type="ChEBI" id="CHEBI:15378"/>
        <dbReference type="ChEBI" id="CHEBI:43474"/>
        <dbReference type="ChEBI" id="CHEBI:58405"/>
        <dbReference type="ChEBI" id="CHEBI:60392"/>
        <dbReference type="EC" id="3.6.1.27"/>
    </reaction>
</comment>
<comment type="subcellular location">
    <subcellularLocation>
        <location evidence="1">Cell inner membrane</location>
        <topology evidence="1">Multi-pass membrane protein</topology>
    </subcellularLocation>
</comment>
<comment type="miscellaneous">
    <text>Bacitracin is thought to be involved in the inhibition of peptidoglycan synthesis by sequestering undecaprenyl diphosphate, thereby reducing the pool of lipid carrier available.</text>
</comment>
<comment type="similarity">
    <text evidence="1">Belongs to the UppP family.</text>
</comment>